<organism>
    <name type="scientific">Bos taurus</name>
    <name type="common">Bovine</name>
    <dbReference type="NCBI Taxonomy" id="9913"/>
    <lineage>
        <taxon>Eukaryota</taxon>
        <taxon>Metazoa</taxon>
        <taxon>Chordata</taxon>
        <taxon>Craniata</taxon>
        <taxon>Vertebrata</taxon>
        <taxon>Euteleostomi</taxon>
        <taxon>Mammalia</taxon>
        <taxon>Eutheria</taxon>
        <taxon>Laurasiatheria</taxon>
        <taxon>Artiodactyla</taxon>
        <taxon>Ruminantia</taxon>
        <taxon>Pecora</taxon>
        <taxon>Bovidae</taxon>
        <taxon>Bovinae</taxon>
        <taxon>Bos</taxon>
    </lineage>
</organism>
<feature type="signal peptide" evidence="5">
    <location>
        <begin position="1"/>
        <end position="25"/>
    </location>
</feature>
<feature type="chain" id="PRO_0000012909" description="Adhesion G protein-coupled receptor L2">
    <location>
        <begin position="26"/>
        <end position="1478"/>
    </location>
</feature>
<feature type="topological domain" description="Extracellular" evidence="5">
    <location>
        <begin position="26"/>
        <end position="855"/>
    </location>
</feature>
<feature type="transmembrane region" description="Helical; Name=1" evidence="5">
    <location>
        <begin position="856"/>
        <end position="876"/>
    </location>
</feature>
<feature type="topological domain" description="Cytoplasmic" evidence="5">
    <location>
        <begin position="877"/>
        <end position="884"/>
    </location>
</feature>
<feature type="transmembrane region" description="Helical; Name=2" evidence="5">
    <location>
        <begin position="885"/>
        <end position="905"/>
    </location>
</feature>
<feature type="topological domain" description="Extracellular" evidence="5">
    <location>
        <begin position="906"/>
        <end position="911"/>
    </location>
</feature>
<feature type="transmembrane region" description="Helical; Name=3" evidence="5">
    <location>
        <begin position="912"/>
        <end position="932"/>
    </location>
</feature>
<feature type="topological domain" description="Cytoplasmic" evidence="5">
    <location>
        <begin position="933"/>
        <end position="955"/>
    </location>
</feature>
<feature type="transmembrane region" description="Helical; Name=4" evidence="5">
    <location>
        <begin position="956"/>
        <end position="976"/>
    </location>
</feature>
<feature type="topological domain" description="Extracellular" evidence="5">
    <location>
        <begin position="977"/>
        <end position="994"/>
    </location>
</feature>
<feature type="transmembrane region" description="Helical; Name=5" evidence="5">
    <location>
        <begin position="995"/>
        <end position="1015"/>
    </location>
</feature>
<feature type="topological domain" description="Cytoplasmic" evidence="5">
    <location>
        <begin position="1016"/>
        <end position="1056"/>
    </location>
</feature>
<feature type="transmembrane region" description="Helical; Name=6" evidence="5">
    <location>
        <begin position="1057"/>
        <end position="1077"/>
    </location>
</feature>
<feature type="topological domain" description="Extracellular" evidence="5">
    <location>
        <begin position="1078"/>
        <end position="1081"/>
    </location>
</feature>
<feature type="transmembrane region" description="Helical; Name=7" evidence="5">
    <location>
        <begin position="1082"/>
        <end position="1102"/>
    </location>
</feature>
<feature type="topological domain" description="Cytoplasmic" evidence="5">
    <location>
        <begin position="1103"/>
        <end position="1478"/>
    </location>
</feature>
<feature type="domain" description="SUEL-type lectin" evidence="7">
    <location>
        <begin position="41"/>
        <end position="130"/>
    </location>
</feature>
<feature type="domain" description="Olfactomedin-like" evidence="8">
    <location>
        <begin position="139"/>
        <end position="398"/>
    </location>
</feature>
<feature type="domain" description="GAIN-B" evidence="6">
    <location>
        <begin position="663"/>
        <end position="841"/>
    </location>
</feature>
<feature type="region of interest" description="Disordered" evidence="9">
    <location>
        <begin position="422"/>
        <end position="458"/>
    </location>
</feature>
<feature type="region of interest" description="GPS" evidence="6">
    <location>
        <begin position="792"/>
        <end position="841"/>
    </location>
</feature>
<feature type="region of interest" description="Disordered" evidence="9">
    <location>
        <begin position="1378"/>
        <end position="1419"/>
    </location>
</feature>
<feature type="compositionally biased region" description="Polar residues" evidence="9">
    <location>
        <begin position="430"/>
        <end position="445"/>
    </location>
</feature>
<feature type="compositionally biased region" description="Polar residues" evidence="9">
    <location>
        <begin position="1383"/>
        <end position="1395"/>
    </location>
</feature>
<feature type="site" description="Cleavage; by autolysis" evidence="6">
    <location>
        <begin position="828"/>
        <end position="829"/>
    </location>
</feature>
<feature type="modified residue" description="Phosphoserine" evidence="3">
    <location>
        <position position="1393"/>
    </location>
</feature>
<feature type="modified residue" description="Phosphoserine" evidence="3">
    <location>
        <position position="1428"/>
    </location>
</feature>
<feature type="modified residue" description="Phosphoserine" evidence="1">
    <location>
        <position position="1449"/>
    </location>
</feature>
<feature type="glycosylation site" description="N-linked (GlcNAc...) asparagine" evidence="5">
    <location>
        <position position="99"/>
    </location>
</feature>
<feature type="glycosylation site" description="N-linked (GlcNAc...) asparagine" evidence="5">
    <location>
        <position position="335"/>
    </location>
</feature>
<feature type="glycosylation site" description="N-linked (GlcNAc...) asparagine" evidence="5">
    <location>
        <position position="524"/>
    </location>
</feature>
<feature type="glycosylation site" description="N-linked (GlcNAc...) asparagine" evidence="5">
    <location>
        <position position="633"/>
    </location>
</feature>
<feature type="glycosylation site" description="N-linked (GlcNAc...) asparagine" evidence="5">
    <location>
        <position position="735"/>
    </location>
</feature>
<feature type="glycosylation site" description="N-linked (GlcNAc...) asparagine" evidence="5">
    <location>
        <position position="748"/>
    </location>
</feature>
<feature type="glycosylation site" description="N-linked (GlcNAc...) asparagine" evidence="5">
    <location>
        <position position="791"/>
    </location>
</feature>
<feature type="glycosylation site" description="N-linked (GlcNAc...) asparagine" evidence="5">
    <location>
        <position position="796"/>
    </location>
</feature>
<feature type="glycosylation site" description="N-linked (GlcNAc...) asparagine" evidence="5">
    <location>
        <position position="817"/>
    </location>
</feature>
<feature type="disulfide bond" evidence="8">
    <location>
        <begin position="140"/>
        <end position="322"/>
    </location>
</feature>
<feature type="disulfide bond" evidence="6">
    <location>
        <begin position="792"/>
        <end position="823"/>
    </location>
</feature>
<feature type="disulfide bond" evidence="6">
    <location>
        <begin position="811"/>
        <end position="825"/>
    </location>
</feature>
<feature type="splice variant" id="VSP_010100" description="In isoform 2, isoform 3 and isoform 4." evidence="10">
    <location>
        <begin position="404"/>
        <end position="469"/>
    </location>
</feature>
<feature type="splice variant" id="VSP_010101" description="In isoform 3, isoform 5, isoform 7, isoform 9 and isoform 11." evidence="10">
    <location>
        <begin position="598"/>
        <end position="610"/>
    </location>
</feature>
<feature type="splice variant" id="VSP_010102" description="In isoform 4, isoform 6, isoform 7, isoform 10 and isoform 11." evidence="10">
    <original>NNYRVCDGYYNTDLPG</original>
    <variation>K</variation>
    <location>
        <begin position="1038"/>
        <end position="1053"/>
    </location>
</feature>
<feature type="splice variant" id="VSP_010103" description="In isoform 8, isoform 9, isoform 10 and isoform 11." evidence="10">
    <location>
        <begin position="1185"/>
        <end position="1227"/>
    </location>
</feature>
<keyword id="KW-0025">Alternative splicing</keyword>
<keyword id="KW-1003">Cell membrane</keyword>
<keyword id="KW-1015">Disulfide bond</keyword>
<keyword id="KW-0297">G-protein coupled receptor</keyword>
<keyword id="KW-0325">Glycoprotein</keyword>
<keyword id="KW-0430">Lectin</keyword>
<keyword id="KW-0472">Membrane</keyword>
<keyword id="KW-0597">Phosphoprotein</keyword>
<keyword id="KW-0628">Postsynaptic cell membrane</keyword>
<keyword id="KW-0675">Receptor</keyword>
<keyword id="KW-1185">Reference proteome</keyword>
<keyword id="KW-0732">Signal</keyword>
<keyword id="KW-0770">Synapse</keyword>
<keyword id="KW-0807">Transducer</keyword>
<keyword id="KW-0812">Transmembrane</keyword>
<keyword id="KW-1133">Transmembrane helix</keyword>
<dbReference type="EMBL" id="AF111072">
    <property type="protein sequence ID" value="AAD05308.1"/>
    <property type="molecule type" value="mRNA"/>
</dbReference>
<dbReference type="EMBL" id="AF111074">
    <property type="protein sequence ID" value="AAD05310.1"/>
    <property type="molecule type" value="mRNA"/>
</dbReference>
<dbReference type="EMBL" id="AF111076">
    <property type="protein sequence ID" value="AAD05312.1"/>
    <property type="molecule type" value="mRNA"/>
</dbReference>
<dbReference type="EMBL" id="AF111077">
    <property type="protein sequence ID" value="AAD05313.1"/>
    <property type="molecule type" value="mRNA"/>
</dbReference>
<dbReference type="EMBL" id="AF111078">
    <property type="protein sequence ID" value="AAD05314.1"/>
    <property type="molecule type" value="mRNA"/>
</dbReference>
<dbReference type="EMBL" id="AF111079">
    <property type="protein sequence ID" value="AAD05315.1"/>
    <property type="molecule type" value="mRNA"/>
</dbReference>
<dbReference type="EMBL" id="AF111080">
    <property type="protein sequence ID" value="AAD05316.1"/>
    <property type="molecule type" value="mRNA"/>
</dbReference>
<dbReference type="EMBL" id="AF111081">
    <property type="protein sequence ID" value="AAD05317.1"/>
    <property type="molecule type" value="mRNA"/>
</dbReference>
<dbReference type="EMBL" id="AF111082">
    <property type="protein sequence ID" value="AAD05318.1"/>
    <property type="molecule type" value="mRNA"/>
</dbReference>
<dbReference type="EMBL" id="AF111083">
    <property type="protein sequence ID" value="AAD05319.1"/>
    <property type="molecule type" value="mRNA"/>
</dbReference>
<dbReference type="EMBL" id="AF111084">
    <property type="protein sequence ID" value="AAD05320.1"/>
    <property type="molecule type" value="mRNA"/>
</dbReference>
<dbReference type="PIR" id="T18370">
    <property type="entry name" value="T18370"/>
</dbReference>
<dbReference type="PIR" id="T18377">
    <property type="entry name" value="T18377"/>
</dbReference>
<dbReference type="PIR" id="T18380">
    <property type="entry name" value="T18380"/>
</dbReference>
<dbReference type="PIR" id="T18381">
    <property type="entry name" value="T18381"/>
</dbReference>
<dbReference type="PIR" id="T18382">
    <property type="entry name" value="T18382"/>
</dbReference>
<dbReference type="PIR" id="T18383">
    <property type="entry name" value="T18383"/>
</dbReference>
<dbReference type="PIR" id="T18384">
    <property type="entry name" value="T18384"/>
</dbReference>
<dbReference type="PIR" id="T18385">
    <property type="entry name" value="T18385"/>
</dbReference>
<dbReference type="PIR" id="T18386">
    <property type="entry name" value="T18386"/>
</dbReference>
<dbReference type="PIR" id="T18387">
    <property type="entry name" value="T18387"/>
</dbReference>
<dbReference type="PIR" id="T18388">
    <property type="entry name" value="T18388"/>
</dbReference>
<dbReference type="RefSeq" id="NP_851356.1">
    <molecule id="O97817-1"/>
    <property type="nucleotide sequence ID" value="NM_181013.1"/>
</dbReference>
<dbReference type="SMR" id="O97817"/>
<dbReference type="FunCoup" id="O97817">
    <property type="interactions" value="1481"/>
</dbReference>
<dbReference type="STRING" id="9913.ENSBTAP00000055886"/>
<dbReference type="MEROPS" id="P02.009"/>
<dbReference type="GlyCosmos" id="O97817">
    <property type="glycosylation" value="9 sites, No reported glycans"/>
</dbReference>
<dbReference type="GlyGen" id="O97817">
    <property type="glycosylation" value="9 sites"/>
</dbReference>
<dbReference type="PaxDb" id="9913-ENSBTAP00000016334"/>
<dbReference type="GeneID" id="281278"/>
<dbReference type="KEGG" id="bta:281278"/>
<dbReference type="CTD" id="23266"/>
<dbReference type="eggNOG" id="KOG3545">
    <property type="taxonomic scope" value="Eukaryota"/>
</dbReference>
<dbReference type="eggNOG" id="KOG4193">
    <property type="taxonomic scope" value="Eukaryota"/>
</dbReference>
<dbReference type="eggNOG" id="KOG4729">
    <property type="taxonomic scope" value="Eukaryota"/>
</dbReference>
<dbReference type="InParanoid" id="O97817"/>
<dbReference type="OrthoDB" id="1100386at2759"/>
<dbReference type="Proteomes" id="UP000009136">
    <property type="component" value="Unplaced"/>
</dbReference>
<dbReference type="GO" id="GO:0005615">
    <property type="term" value="C:extracellular space"/>
    <property type="evidence" value="ECO:0000318"/>
    <property type="project" value="GO_Central"/>
</dbReference>
<dbReference type="GO" id="GO:0045211">
    <property type="term" value="C:postsynaptic membrane"/>
    <property type="evidence" value="ECO:0000250"/>
    <property type="project" value="UniProtKB"/>
</dbReference>
<dbReference type="GO" id="GO:0030246">
    <property type="term" value="F:carbohydrate binding"/>
    <property type="evidence" value="ECO:0007669"/>
    <property type="project" value="UniProtKB-KW"/>
</dbReference>
<dbReference type="GO" id="GO:0004930">
    <property type="term" value="F:G protein-coupled receptor activity"/>
    <property type="evidence" value="ECO:0007669"/>
    <property type="project" value="UniProtKB-KW"/>
</dbReference>
<dbReference type="GO" id="GO:0007166">
    <property type="term" value="P:cell surface receptor signaling pathway"/>
    <property type="evidence" value="ECO:0007669"/>
    <property type="project" value="InterPro"/>
</dbReference>
<dbReference type="GO" id="GO:1904861">
    <property type="term" value="P:excitatory synapse assembly"/>
    <property type="evidence" value="ECO:0000250"/>
    <property type="project" value="UniProtKB"/>
</dbReference>
<dbReference type="GO" id="GO:0007165">
    <property type="term" value="P:signal transduction"/>
    <property type="evidence" value="ECO:0000318"/>
    <property type="project" value="GO_Central"/>
</dbReference>
<dbReference type="CDD" id="cd22845">
    <property type="entry name" value="Gal_Rha_Lectin_LPHN2"/>
    <property type="match status" value="1"/>
</dbReference>
<dbReference type="FunFam" id="1.20.1070.10:FF:000011">
    <property type="entry name" value="Adhesion G protein-coupled receptor L2"/>
    <property type="match status" value="1"/>
</dbReference>
<dbReference type="FunFam" id="1.25.40.610:FF:000001">
    <property type="entry name" value="Adhesion G protein-coupled receptor L2"/>
    <property type="match status" value="1"/>
</dbReference>
<dbReference type="FunFam" id="2.60.120.740:FF:000001">
    <property type="entry name" value="Adhesion G protein-coupled receptor L2"/>
    <property type="match status" value="1"/>
</dbReference>
<dbReference type="FunFam" id="2.60.220.50:FF:000001">
    <property type="entry name" value="Adhesion G protein-coupled receptor L2"/>
    <property type="match status" value="1"/>
</dbReference>
<dbReference type="FunFam" id="4.10.1240.10:FF:000001">
    <property type="entry name" value="Adhesion G protein-coupled receptor L2"/>
    <property type="match status" value="1"/>
</dbReference>
<dbReference type="Gene3D" id="1.25.40.610">
    <property type="match status" value="1"/>
</dbReference>
<dbReference type="Gene3D" id="2.60.120.740">
    <property type="match status" value="1"/>
</dbReference>
<dbReference type="Gene3D" id="2.60.220.50">
    <property type="match status" value="1"/>
</dbReference>
<dbReference type="Gene3D" id="4.10.1240.10">
    <property type="entry name" value="GPCR, family 2, extracellular hormone receptor domain"/>
    <property type="match status" value="1"/>
</dbReference>
<dbReference type="Gene3D" id="1.20.1070.10">
    <property type="entry name" value="Rhodopsin 7-helix transmembrane proteins"/>
    <property type="match status" value="1"/>
</dbReference>
<dbReference type="InterPro" id="IPR057244">
    <property type="entry name" value="GAIN_B"/>
</dbReference>
<dbReference type="InterPro" id="IPR032471">
    <property type="entry name" value="GAIN_dom_N"/>
</dbReference>
<dbReference type="InterPro" id="IPR046338">
    <property type="entry name" value="GAIN_dom_sf"/>
</dbReference>
<dbReference type="InterPro" id="IPR017981">
    <property type="entry name" value="GPCR_2-like_7TM"/>
</dbReference>
<dbReference type="InterPro" id="IPR036445">
    <property type="entry name" value="GPCR_2_extracell_dom_sf"/>
</dbReference>
<dbReference type="InterPro" id="IPR001879">
    <property type="entry name" value="GPCR_2_extracellular_dom"/>
</dbReference>
<dbReference type="InterPro" id="IPR003924">
    <property type="entry name" value="GPCR_2_latrophilin"/>
</dbReference>
<dbReference type="InterPro" id="IPR003334">
    <property type="entry name" value="GPCR_2_latrophilin_rcpt_C"/>
</dbReference>
<dbReference type="InterPro" id="IPR000832">
    <property type="entry name" value="GPCR_2_secretin-like"/>
</dbReference>
<dbReference type="InterPro" id="IPR017983">
    <property type="entry name" value="GPCR_2_secretin-like_CS"/>
</dbReference>
<dbReference type="InterPro" id="IPR000203">
    <property type="entry name" value="GPS"/>
</dbReference>
<dbReference type="InterPro" id="IPR000922">
    <property type="entry name" value="Lectin_gal-bd_dom"/>
</dbReference>
<dbReference type="InterPro" id="IPR043159">
    <property type="entry name" value="Lectin_gal-bd_sf"/>
</dbReference>
<dbReference type="InterPro" id="IPR003112">
    <property type="entry name" value="Olfac-like_dom"/>
</dbReference>
<dbReference type="PANTHER" id="PTHR12011:SF61">
    <property type="entry name" value="ADHESION G PROTEIN-COUPLED RECEPTOR L2"/>
    <property type="match status" value="1"/>
</dbReference>
<dbReference type="PANTHER" id="PTHR12011">
    <property type="entry name" value="ADHESION G-PROTEIN COUPLED RECEPTOR"/>
    <property type="match status" value="1"/>
</dbReference>
<dbReference type="Pfam" id="PF00002">
    <property type="entry name" value="7tm_2"/>
    <property type="match status" value="1"/>
</dbReference>
<dbReference type="Pfam" id="PF16489">
    <property type="entry name" value="GAIN"/>
    <property type="match status" value="1"/>
</dbReference>
<dbReference type="Pfam" id="PF01825">
    <property type="entry name" value="GPS"/>
    <property type="match status" value="1"/>
</dbReference>
<dbReference type="Pfam" id="PF02793">
    <property type="entry name" value="HRM"/>
    <property type="match status" value="1"/>
</dbReference>
<dbReference type="Pfam" id="PF02354">
    <property type="entry name" value="Latrophilin"/>
    <property type="match status" value="1"/>
</dbReference>
<dbReference type="Pfam" id="PF02191">
    <property type="entry name" value="OLF"/>
    <property type="match status" value="1"/>
</dbReference>
<dbReference type="Pfam" id="PF02140">
    <property type="entry name" value="SUEL_Lectin"/>
    <property type="match status" value="1"/>
</dbReference>
<dbReference type="PRINTS" id="PR00249">
    <property type="entry name" value="GPCRSECRETIN"/>
</dbReference>
<dbReference type="PRINTS" id="PR01444">
    <property type="entry name" value="LATROPHILIN"/>
</dbReference>
<dbReference type="SMART" id="SM00303">
    <property type="entry name" value="GPS"/>
    <property type="match status" value="1"/>
</dbReference>
<dbReference type="SMART" id="SM00008">
    <property type="entry name" value="HormR"/>
    <property type="match status" value="1"/>
</dbReference>
<dbReference type="SMART" id="SM00284">
    <property type="entry name" value="OLF"/>
    <property type="match status" value="1"/>
</dbReference>
<dbReference type="SUPFAM" id="SSF81321">
    <property type="entry name" value="Family A G protein-coupled receptor-like"/>
    <property type="match status" value="1"/>
</dbReference>
<dbReference type="SUPFAM" id="SSF111418">
    <property type="entry name" value="Hormone receptor domain"/>
    <property type="match status" value="1"/>
</dbReference>
<dbReference type="PROSITE" id="PS00650">
    <property type="entry name" value="G_PROTEIN_RECEP_F2_2"/>
    <property type="match status" value="1"/>
</dbReference>
<dbReference type="PROSITE" id="PS50227">
    <property type="entry name" value="G_PROTEIN_RECEP_F2_3"/>
    <property type="match status" value="1"/>
</dbReference>
<dbReference type="PROSITE" id="PS50261">
    <property type="entry name" value="G_PROTEIN_RECEP_F2_4"/>
    <property type="match status" value="1"/>
</dbReference>
<dbReference type="PROSITE" id="PS50221">
    <property type="entry name" value="GAIN_B"/>
    <property type="match status" value="1"/>
</dbReference>
<dbReference type="PROSITE" id="PS51132">
    <property type="entry name" value="OLF"/>
    <property type="match status" value="1"/>
</dbReference>
<dbReference type="PROSITE" id="PS50228">
    <property type="entry name" value="SUEL_LECTIN"/>
    <property type="match status" value="1"/>
</dbReference>
<gene>
    <name type="primary">ADGRL2</name>
    <name type="synonym">LPH2</name>
    <name type="synonym">LPHN2</name>
</gene>
<name>AGRL2_BOVIN</name>
<comment type="function">
    <text evidence="2 3">Orphan adhesion G-protein coupled receptor (aGPCR), which mediates synapse specificity (By similarity). Ligand binding causes a conformation change that triggers signaling via guanine nucleotide-binding proteins (G proteins) and modulates the activity of downstream effectors (By similarity). Following G-protein coupled receptor activation, associates with cell adhesion molecules that are expressed at the surface of adjacent cells to direct synapse specificity. Specifically mediates the establishment of perforant-path synapses on CA1-region pyramidal neurons in the hippocampus. Localizes to postsynaptic spines in excitatory synapses in the S.lacunosum-moleculare and interacts with presynaptic cell adhesion molecules, such as teneurins, promoting synapse formation (By similarity).</text>
</comment>
<comment type="activity regulation">
    <text evidence="4 6">Forms a heterodimer of 2 chains generated by proteolytic processing that remain associated through non-covalent interactions mediated by the GAIN-B domain (By similarity). In the inactivated receptor, the Stachel sequence (also named stalk) is embedded in the GAIN-B domain, where it adopts a beta-strand conformation. On activation, the Stachel moves into the 7 transmembrane region and adopts a twisted hook-shaped configuration that forms contacts within the receptor, leading to coupling of a G-alpha protein, which activates signaling. The cleaved GAIN-B and N-terminal domains can then dissociate from the rest of the receptor (By similarity).</text>
</comment>
<comment type="subunit">
    <text evidence="6">Heterodimer of 2 chains generated by proteolytic processing; the large extracellular N-terminal fragment and the membrane-bound C-terminal fragment predominantly remain associated and non-covalently linked.</text>
</comment>
<comment type="subcellular location">
    <subcellularLocation>
        <location evidence="3">Postsynaptic cell membrane</location>
        <topology evidence="5">Multi-pass membrane protein</topology>
    </subcellularLocation>
</comment>
<comment type="alternative products">
    <event type="alternative splicing"/>
    <isoform>
        <id>O97817-1</id>
        <name>1</name>
        <name>bbbbf</name>
        <sequence type="displayed"/>
    </isoform>
    <isoform>
        <id>O97817-2</id>
        <name>2</name>
        <name>babbf</name>
        <sequence type="described" ref="VSP_010100"/>
    </isoform>
    <isoform>
        <id>O97817-3</id>
        <name>3</name>
        <name>baabf</name>
        <sequence type="described" ref="VSP_010100 VSP_010101"/>
    </isoform>
    <isoform>
        <id>O97817-4</id>
        <name>4</name>
        <name>babaf</name>
        <sequence type="described" ref="VSP_010100 VSP_010102"/>
    </isoform>
    <isoform>
        <id>O97817-5</id>
        <name>5</name>
        <name>bbabf</name>
        <sequence type="described" ref="VSP_010101"/>
    </isoform>
    <isoform>
        <id>O97817-6</id>
        <name>6</name>
        <name>bbbaf</name>
        <sequence type="described" ref="VSP_010102"/>
    </isoform>
    <isoform>
        <id>O97817-7</id>
        <name>7</name>
        <name>bbaaf</name>
        <sequence type="described" ref="VSP_010101 VSP_010102"/>
    </isoform>
    <isoform>
        <id>O97817-8</id>
        <name>8</name>
        <name>bbbbe</name>
        <sequence type="described" ref="VSP_010103"/>
    </isoform>
    <isoform>
        <id>O97817-9</id>
        <name>9</name>
        <name>bbabe</name>
        <sequence type="described" ref="VSP_010101 VSP_010103"/>
    </isoform>
    <isoform>
        <id>O97817-10</id>
        <name>10</name>
        <name>bbbae</name>
        <sequence type="described" ref="VSP_010102 VSP_010103"/>
    </isoform>
    <isoform>
        <id>O97817-11</id>
        <name>11</name>
        <name>bbaae</name>
        <sequence type="described" ref="VSP_010101 VSP_010102 VSP_010103"/>
    </isoform>
</comment>
<comment type="tissue specificity">
    <text>Ubiquitously expressed.</text>
</comment>
<comment type="domain">
    <text evidence="4">The Stachel sequence (also named stalk) in the C-terminal part of the extracellular domain (ECD) functions as a tethered agonist. In the inactivated receptor, the Stachel sequence (also named stalk) is embedded in the GAIN-B domain, where it adopts a beta-strand conformation. On activation, the Stachel moves into the 7 transmembrane region and adopts a twisted hook-shaped configuration that forms contacts within the receptor, leading to coupling of a G-alpha protein, which activates signaling.</text>
</comment>
<comment type="PTM">
    <text evidence="6">Autoproteolytically processed at the GPS region of the GAIN-B domain; this cleavage modulates receptor activity.</text>
</comment>
<comment type="similarity">
    <text evidence="11">Belongs to the G-protein coupled receptor 2 family. Adhesion G-protein coupled receptor (ADGR) subfamily.</text>
</comment>
<sequence length="1478" mass="165547">MVSSGCRMRSLWFIIIISFLPNTEGFSRAALPFGLVRRELSCEGYSIDLRCPGSDVIMIESANYGRTDDKICDADPFQMENTDCYLPDAFKIMTQRCNNRTQCIVVTGSDVFPDPCPGTYKYLEVQYECVPYMEQKVFVCPGTLKAIVDSPCIYEAEQKAGAWCKDPLQAADKIYFMPWTPYRTDTLIEYASLEDFQNSRQTTTYKLPNRVDGTGFVVYDGAVFFNKERTRNIVKYDLRTRIKSGEAIINYANYHDTSPYRWGGKTDIDLAVDENGLWVIYATEQNNGMIVISQLNPYTLRFEATWETVYDKRAASNAFMICGVLYVVRSVYQDNESETGKNAIDYIYNTRLNRGEYVDVPFPNQYQYIAAVDYNPRDNQLYVWNNNFILRYSLEFGPPDPAQVPTTAVTITSSAEMFKTTVSTTSTTSQKGPMSTTVAGSQEGSKGTKAPPAVSTTKIPPVTNIFPLPERFCEALDARGIRWPQTQRGMMVERPCPKGTRGTASYLCVLSTGTWNPKGPDLSNCTSHWVNQLAQKIRSGENAASLANELAKHTKGPVFAGDVSSSVRLMEQLVDILDAQLQELKPSEKDSAGRSYNKLQKREKTCRAYLKAIVDTVDNLLRPEALESWKHMNSSEQAHTATMLLDTLEEGAFVLADNLVEPTRVSMPTENIVLEVAVLSTEGQVQDFKFPLGIKGAGSSIQLSANTVKQNSRNGLAKLVFIIYRSLGQFLSTENATIKLGADFIGRNSTIAVNSHVISVSINKESSRVYLTDPVLFTLPHIDPDNYFNANCSFWNYSERTMMGYWSTQGCKLVDTNKTRTTCACSHLTNFAILMAHREIAYKDGVHELLLTVITWVGIVISLVCLAICIFTFCFFRGLQSDRNTIHKNLCINLFIAEFIFLIGIDKTKYMIACPIFAGLLHFFFLAAFAWMCLEGVQLYLMLVEVFESEYSRKKYYYVAGYLFPATVVGVSAAIDYKSYGTEKACWLHVDNYFIWSFIGPVTFIILLNIIFLVITLCKMVKHSNTLKPDSSRLENINNYRVCDGYYNTDLPGSWVLGAFALLCLLGLTWSFGLLFINEETIVMAYLFTIFNAFQGVFIFIFHCALQKKVRKEYGKCFRHSYCCGGLPTESPHSSVKASTTRTSARYSSGTQSRIRRMWNDTVRKQSESSFISGDINSTSTLNQGMTGNYLLTNPLLRPHGTNNPYNTLLAETVVCNAPSAPVFNSPGHSLNNARDTSAMDTLPLNGNFNNSYSLRKGDYNDSVQVVDCGLSLNDTAFEKMIISELVHNNLRGSSKAHNLELTLPVKPVIGGSSSEDDAIVADASSLMHGDNPGLELHHKELEAPLIPQRTHSLLYQPQKKAKPEGTDSYVSQLTAEAEDHLQSPNRDSLYTSMPNLRDSPYQESSPDMEEDLSPSRRSENEDIYYKSMPNLGAGHQLQMCYQISRGNSDGYIIPINKEGCIPEGDVREGQMQLVTSL</sequence>
<protein>
    <recommendedName>
        <fullName>Adhesion G protein-coupled receptor L2</fullName>
    </recommendedName>
    <alternativeName>
        <fullName>Calcium-independent alpha-latrotoxin receptor 2</fullName>
        <shortName>CIRL-2</shortName>
    </alternativeName>
    <alternativeName>
        <fullName>Latrophilin-2</fullName>
    </alternativeName>
</protein>
<accession>O97817</accession>
<accession>O97805</accession>
<accession>O97807</accession>
<accession>O97809</accession>
<accession>O97810</accession>
<accession>O97811</accession>
<accession>O97812</accession>
<accession>O97813</accession>
<accession>O97814</accession>
<accession>O97815</accession>
<accession>O97816</accession>
<evidence type="ECO:0000250" key="1">
    <source>
        <dbReference type="UniProtKB" id="O95490"/>
    </source>
</evidence>
<evidence type="ECO:0000250" key="2">
    <source>
        <dbReference type="UniProtKB" id="Q80TS3"/>
    </source>
</evidence>
<evidence type="ECO:0000250" key="3">
    <source>
        <dbReference type="UniProtKB" id="Q8JZZ7"/>
    </source>
</evidence>
<evidence type="ECO:0000250" key="4">
    <source>
        <dbReference type="UniProtKB" id="Q9HAR2"/>
    </source>
</evidence>
<evidence type="ECO:0000255" key="5"/>
<evidence type="ECO:0000255" key="6">
    <source>
        <dbReference type="PROSITE-ProRule" id="PRU00098"/>
    </source>
</evidence>
<evidence type="ECO:0000255" key="7">
    <source>
        <dbReference type="PROSITE-ProRule" id="PRU00260"/>
    </source>
</evidence>
<evidence type="ECO:0000255" key="8">
    <source>
        <dbReference type="PROSITE-ProRule" id="PRU00446"/>
    </source>
</evidence>
<evidence type="ECO:0000256" key="9">
    <source>
        <dbReference type="SAM" id="MobiDB-lite"/>
    </source>
</evidence>
<evidence type="ECO:0000303" key="10">
    <source>
    </source>
</evidence>
<evidence type="ECO:0000305" key="11"/>
<proteinExistence type="evidence at transcript level"/>
<reference key="1">
    <citation type="journal article" date="1999" name="FEBS Lett.">
        <title>The latrophilin family: multiply spliced G protein-coupled receptors with differential tissue distribution.</title>
        <authorList>
            <person name="Matsushita H."/>
            <person name="Lelianova V.G."/>
            <person name="Ushkaryov Y.A."/>
        </authorList>
    </citation>
    <scope>NUCLEOTIDE SEQUENCE [MRNA] (ISOFORMS 1; 2; 3; 4; 5; 6; 7; 8; 9; 10 AND 11)</scope>
</reference>